<gene>
    <name type="ORF">CBG11572</name>
</gene>
<accession>A8XDI8</accession>
<organism>
    <name type="scientific">Caenorhabditis briggsae</name>
    <dbReference type="NCBI Taxonomy" id="6238"/>
    <lineage>
        <taxon>Eukaryota</taxon>
        <taxon>Metazoa</taxon>
        <taxon>Ecdysozoa</taxon>
        <taxon>Nematoda</taxon>
        <taxon>Chromadorea</taxon>
        <taxon>Rhabditida</taxon>
        <taxon>Rhabditina</taxon>
        <taxon>Rhabditomorpha</taxon>
        <taxon>Rhabditoidea</taxon>
        <taxon>Rhabditidae</taxon>
        <taxon>Peloderinae</taxon>
        <taxon>Caenorhabditis</taxon>
    </lineage>
</organism>
<feature type="chain" id="PRO_0000401988" description="Methylthioribose-1-phosphate isomerase">
    <location>
        <begin position="1"/>
        <end position="366"/>
    </location>
</feature>
<feature type="active site" description="Proton donor" evidence="1">
    <location>
        <position position="260"/>
    </location>
</feature>
<feature type="site" description="Transition state stabilizer" evidence="1">
    <location>
        <position position="180"/>
    </location>
</feature>
<evidence type="ECO:0000255" key="1">
    <source>
        <dbReference type="HAMAP-Rule" id="MF_03119"/>
    </source>
</evidence>
<dbReference type="EC" id="5.3.1.23" evidence="1"/>
<dbReference type="EMBL" id="HE600985">
    <property type="protein sequence ID" value="CAP30707.1"/>
    <property type="molecule type" value="Genomic_DNA"/>
</dbReference>
<dbReference type="RefSeq" id="XP_002637707.1">
    <property type="nucleotide sequence ID" value="XM_002637661.1"/>
</dbReference>
<dbReference type="SMR" id="A8XDI8"/>
<dbReference type="FunCoup" id="A8XDI8">
    <property type="interactions" value="2410"/>
</dbReference>
<dbReference type="STRING" id="6238.A8XDI8"/>
<dbReference type="EnsemblMetazoa" id="CBG11572.1">
    <property type="protein sequence ID" value="CBG11572.1"/>
    <property type="gene ID" value="WBGene00032675"/>
</dbReference>
<dbReference type="GeneID" id="8579703"/>
<dbReference type="KEGG" id="cbr:CBG_11572"/>
<dbReference type="CTD" id="8579703"/>
<dbReference type="WormBase" id="CBG11572">
    <property type="protein sequence ID" value="CBP08880"/>
    <property type="gene ID" value="WBGene00032675"/>
</dbReference>
<dbReference type="eggNOG" id="KOG1468">
    <property type="taxonomic scope" value="Eukaryota"/>
</dbReference>
<dbReference type="HOGENOM" id="CLU_016218_1_2_1"/>
<dbReference type="InParanoid" id="A8XDI8"/>
<dbReference type="OMA" id="CETRPLN"/>
<dbReference type="UniPathway" id="UPA00904">
    <property type="reaction ID" value="UER00874"/>
</dbReference>
<dbReference type="Proteomes" id="UP000008549">
    <property type="component" value="Unassembled WGS sequence"/>
</dbReference>
<dbReference type="GO" id="GO:0005737">
    <property type="term" value="C:cytoplasm"/>
    <property type="evidence" value="ECO:0007669"/>
    <property type="project" value="UniProtKB-SubCell"/>
</dbReference>
<dbReference type="GO" id="GO:0005634">
    <property type="term" value="C:nucleus"/>
    <property type="evidence" value="ECO:0007669"/>
    <property type="project" value="UniProtKB-SubCell"/>
</dbReference>
<dbReference type="GO" id="GO:0046523">
    <property type="term" value="F:S-methyl-5-thioribose-1-phosphate isomerase activity"/>
    <property type="evidence" value="ECO:0000318"/>
    <property type="project" value="GO_Central"/>
</dbReference>
<dbReference type="GO" id="GO:0019509">
    <property type="term" value="P:L-methionine salvage from methylthioadenosine"/>
    <property type="evidence" value="ECO:0000318"/>
    <property type="project" value="GO_Central"/>
</dbReference>
<dbReference type="FunFam" id="1.20.120.420:FF:000015">
    <property type="entry name" value="Methylthioribose-1-phosphate isomerase"/>
    <property type="match status" value="1"/>
</dbReference>
<dbReference type="FunFam" id="3.40.50.10470:FF:000028">
    <property type="entry name" value="Methylthioribose-1-phosphate isomerase"/>
    <property type="match status" value="1"/>
</dbReference>
<dbReference type="Gene3D" id="1.20.120.420">
    <property type="entry name" value="translation initiation factor eif-2b, domain 1"/>
    <property type="match status" value="1"/>
</dbReference>
<dbReference type="Gene3D" id="3.40.50.10470">
    <property type="entry name" value="Translation initiation factor eif-2b, domain 2"/>
    <property type="match status" value="1"/>
</dbReference>
<dbReference type="HAMAP" id="MF_01678">
    <property type="entry name" value="Salvage_MtnA"/>
    <property type="match status" value="1"/>
</dbReference>
<dbReference type="InterPro" id="IPR000649">
    <property type="entry name" value="IF-2B-related"/>
</dbReference>
<dbReference type="InterPro" id="IPR005251">
    <property type="entry name" value="IF-M1Pi"/>
</dbReference>
<dbReference type="InterPro" id="IPR042529">
    <property type="entry name" value="IF_2B-like_C"/>
</dbReference>
<dbReference type="InterPro" id="IPR011559">
    <property type="entry name" value="Initiation_fac_2B_a/b/d"/>
</dbReference>
<dbReference type="InterPro" id="IPR027363">
    <property type="entry name" value="M1Pi_N"/>
</dbReference>
<dbReference type="InterPro" id="IPR037171">
    <property type="entry name" value="NagB/RpiA_transferase-like"/>
</dbReference>
<dbReference type="NCBIfam" id="TIGR00524">
    <property type="entry name" value="eIF-2B_rel"/>
    <property type="match status" value="1"/>
</dbReference>
<dbReference type="NCBIfam" id="NF004326">
    <property type="entry name" value="PRK05720.1"/>
    <property type="match status" value="1"/>
</dbReference>
<dbReference type="NCBIfam" id="TIGR00512">
    <property type="entry name" value="salvage_mtnA"/>
    <property type="match status" value="1"/>
</dbReference>
<dbReference type="PANTHER" id="PTHR43475">
    <property type="entry name" value="METHYLTHIORIBOSE-1-PHOSPHATE ISOMERASE"/>
    <property type="match status" value="1"/>
</dbReference>
<dbReference type="PANTHER" id="PTHR43475:SF1">
    <property type="entry name" value="METHYLTHIORIBOSE-1-PHOSPHATE ISOMERASE"/>
    <property type="match status" value="1"/>
</dbReference>
<dbReference type="Pfam" id="PF01008">
    <property type="entry name" value="IF-2B"/>
    <property type="match status" value="1"/>
</dbReference>
<dbReference type="SUPFAM" id="SSF100950">
    <property type="entry name" value="NagB/RpiA/CoA transferase-like"/>
    <property type="match status" value="1"/>
</dbReference>
<name>MTNA_CAEBR</name>
<reference key="1">
    <citation type="journal article" date="2003" name="PLoS Biol.">
        <title>The genome sequence of Caenorhabditis briggsae: a platform for comparative genomics.</title>
        <authorList>
            <person name="Stein L.D."/>
            <person name="Bao Z."/>
            <person name="Blasiar D."/>
            <person name="Blumenthal T."/>
            <person name="Brent M.R."/>
            <person name="Chen N."/>
            <person name="Chinwalla A."/>
            <person name="Clarke L."/>
            <person name="Clee C."/>
            <person name="Coghlan A."/>
            <person name="Coulson A."/>
            <person name="D'Eustachio P."/>
            <person name="Fitch D.H.A."/>
            <person name="Fulton L.A."/>
            <person name="Fulton R.E."/>
            <person name="Griffiths-Jones S."/>
            <person name="Harris T.W."/>
            <person name="Hillier L.W."/>
            <person name="Kamath R."/>
            <person name="Kuwabara P.E."/>
            <person name="Mardis E.R."/>
            <person name="Marra M.A."/>
            <person name="Miner T.L."/>
            <person name="Minx P."/>
            <person name="Mullikin J.C."/>
            <person name="Plumb R.W."/>
            <person name="Rogers J."/>
            <person name="Schein J.E."/>
            <person name="Sohrmann M."/>
            <person name="Spieth J."/>
            <person name="Stajich J.E."/>
            <person name="Wei C."/>
            <person name="Willey D."/>
            <person name="Wilson R.K."/>
            <person name="Durbin R.M."/>
            <person name="Waterston R.H."/>
        </authorList>
    </citation>
    <scope>NUCLEOTIDE SEQUENCE [LARGE SCALE GENOMIC DNA]</scope>
    <source>
        <strain>AF16</strain>
    </source>
</reference>
<proteinExistence type="inferred from homology"/>
<sequence length="366" mass="40738">MAPKINKIVNGPIPDSFLADETKRLDSLKFDGQRLEVLDQLLLPHEFKYIPVNDVSDAFNVIKSMQVRGAPLIAVVGSLGLLLEFNKNSELNIETIREKIEYLITSRPTAVDLRNSVTGLIPILETEGITDDEKLAKCQEYLLNVYTAEKLQNRILLWNAYQELLTAFPGKEKFTVMTICNTGSLATVSWGTALGVIRALHSENRLNLAYVLETRPYNQGIRLTATELLHGQVPFKLITDSMAAWAMKNHQLDCVLVGADNVARNGDTANKIGTYMLAVLCKHHNINFYPVVPFTTINKNISSGEEIKIEERAASELLRVNGVLVGNSECPVWNPAFDVTPAHLITKILTDFGNWSPAALEEQIPR</sequence>
<keyword id="KW-0028">Amino-acid biosynthesis</keyword>
<keyword id="KW-0963">Cytoplasm</keyword>
<keyword id="KW-0413">Isomerase</keyword>
<keyword id="KW-0486">Methionine biosynthesis</keyword>
<keyword id="KW-0539">Nucleus</keyword>
<keyword id="KW-1185">Reference proteome</keyword>
<comment type="function">
    <text evidence="1">Catalyzes the interconversion of methylthioribose-1-phosphate (MTR-1-P) into methylthioribulose-1-phosphate (MTRu-1-P).</text>
</comment>
<comment type="catalytic activity">
    <reaction evidence="1">
        <text>5-(methylsulfanyl)-alpha-D-ribose 1-phosphate = 5-(methylsulfanyl)-D-ribulose 1-phosphate</text>
        <dbReference type="Rhea" id="RHEA:19989"/>
        <dbReference type="ChEBI" id="CHEBI:58533"/>
        <dbReference type="ChEBI" id="CHEBI:58548"/>
        <dbReference type="EC" id="5.3.1.23"/>
    </reaction>
</comment>
<comment type="pathway">
    <text evidence="1">Amino-acid biosynthesis; L-methionine biosynthesis via salvage pathway; L-methionine from S-methyl-5-thio-alpha-D-ribose 1-phosphate: step 1/6.</text>
</comment>
<comment type="subcellular location">
    <subcellularLocation>
        <location evidence="1">Cytoplasm</location>
    </subcellularLocation>
    <subcellularLocation>
        <location evidence="1">Nucleus</location>
    </subcellularLocation>
</comment>
<comment type="similarity">
    <text evidence="1">Belongs to the eIF-2B alpha/beta/delta subunits family. MtnA subfamily.</text>
</comment>
<protein>
    <recommendedName>
        <fullName evidence="1">Methylthioribose-1-phosphate isomerase</fullName>
        <shortName evidence="1">M1Pi</shortName>
        <shortName evidence="1">MTR-1-P isomerase</shortName>
        <ecNumber evidence="1">5.3.1.23</ecNumber>
    </recommendedName>
    <alternativeName>
        <fullName evidence="1">S-methyl-5-thioribose-1-phosphate isomerase</fullName>
    </alternativeName>
    <alternativeName>
        <fullName evidence="1">Translation initiation factor eIF-2B subunit alpha/beta/delta-like protein</fullName>
    </alternativeName>
</protein>